<keyword id="KW-0256">Endoplasmic reticulum</keyword>
<keyword id="KW-0328">Glycosyltransferase</keyword>
<keyword id="KW-0337">GPI-anchor biosynthesis</keyword>
<keyword id="KW-0472">Membrane</keyword>
<keyword id="KW-1185">Reference proteome</keyword>
<keyword id="KW-0808">Transferase</keyword>
<keyword id="KW-0812">Transmembrane</keyword>
<keyword id="KW-1133">Transmembrane helix</keyword>
<feature type="chain" id="PRO_0000246220" description="GPI alpha-1,4-mannosyltransferase I, catalytic subunit">
    <location>
        <begin position="1"/>
        <end position="419"/>
    </location>
</feature>
<feature type="topological domain" description="Cytoplasmic" evidence="3">
    <location>
        <begin position="1"/>
        <end position="13"/>
    </location>
</feature>
<feature type="transmembrane region" description="Helical" evidence="3">
    <location>
        <begin position="14"/>
        <end position="34"/>
    </location>
</feature>
<feature type="topological domain" description="Lumenal" evidence="3">
    <location>
        <begin position="35"/>
        <end position="88"/>
    </location>
</feature>
<feature type="transmembrane region" description="Helical" evidence="3">
    <location>
        <begin position="89"/>
        <end position="111"/>
    </location>
</feature>
<feature type="topological domain" description="Cytoplasmic" evidence="3">
    <location>
        <begin position="112"/>
        <end position="114"/>
    </location>
</feature>
<feature type="transmembrane region" description="Helical" evidence="3">
    <location>
        <begin position="115"/>
        <end position="135"/>
    </location>
</feature>
<feature type="topological domain" description="Lumenal" evidence="3">
    <location>
        <begin position="136"/>
        <end position="168"/>
    </location>
</feature>
<feature type="transmembrane region" description="Helical" evidence="3">
    <location>
        <begin position="169"/>
        <end position="189"/>
    </location>
</feature>
<feature type="topological domain" description="Cytoplasmic" evidence="3">
    <location>
        <begin position="190"/>
        <end position="224"/>
    </location>
</feature>
<feature type="transmembrane region" description="Helical" evidence="3">
    <location>
        <begin position="225"/>
        <end position="245"/>
    </location>
</feature>
<feature type="topological domain" description="Lumenal" evidence="3">
    <location>
        <begin position="246"/>
        <end position="285"/>
    </location>
</feature>
<feature type="transmembrane region" description="Helical" evidence="3">
    <location>
        <begin position="286"/>
        <end position="306"/>
    </location>
</feature>
<feature type="topological domain" description="Cytoplasmic" evidence="3">
    <location>
        <begin position="307"/>
        <end position="327"/>
    </location>
</feature>
<feature type="transmembrane region" description="Helical" evidence="3">
    <location>
        <begin position="328"/>
        <end position="348"/>
    </location>
</feature>
<feature type="topological domain" description="Lumenal" evidence="3">
    <location>
        <begin position="349"/>
        <end position="355"/>
    </location>
</feature>
<feature type="transmembrane region" description="Helical" evidence="3">
    <location>
        <begin position="356"/>
        <end position="376"/>
    </location>
</feature>
<feature type="topological domain" description="Cytoplasmic" evidence="3">
    <location>
        <begin position="377"/>
        <end position="382"/>
    </location>
</feature>
<feature type="transmembrane region" description="Helical" evidence="3">
    <location>
        <begin position="383"/>
        <end position="403"/>
    </location>
</feature>
<feature type="topological domain" description="Lumenal" evidence="3">
    <location>
        <begin position="404"/>
        <end position="419"/>
    </location>
</feature>
<organism>
    <name type="scientific">Xenopus tropicalis</name>
    <name type="common">Western clawed frog</name>
    <name type="synonym">Silurana tropicalis</name>
    <dbReference type="NCBI Taxonomy" id="8364"/>
    <lineage>
        <taxon>Eukaryota</taxon>
        <taxon>Metazoa</taxon>
        <taxon>Chordata</taxon>
        <taxon>Craniata</taxon>
        <taxon>Vertebrata</taxon>
        <taxon>Euteleostomi</taxon>
        <taxon>Amphibia</taxon>
        <taxon>Batrachia</taxon>
        <taxon>Anura</taxon>
        <taxon>Pipoidea</taxon>
        <taxon>Pipidae</taxon>
        <taxon>Xenopodinae</taxon>
        <taxon>Xenopus</taxon>
        <taxon>Silurana</taxon>
    </lineage>
</organism>
<gene>
    <name evidence="2" type="primary">pigm</name>
    <name type="ORF">TGas014d02.1</name>
</gene>
<accession>Q66IJ4</accession>
<comment type="function">
    <text evidence="2">Catalytic subunit of the glycosylphosphatidylinositol-mannosyltransferase I complex which catalyzes the transfer of the first mannose, via an alpha-1,4 bond from a dolichol-phosphate-mannose (Dol-P-Man) to the glucosaminyl acyl phosphatidylinositol (GlcN-(acyl)PI) intermediate to generate alpha-D-Man-(1-&gt;4)-alpha-D-GlcN-(1-&gt;6)-(1-radyl,2-acyl-sn-glycero-3-phospho)-2-acyl-inositol and participates in the sixth step of the glycosylphosphatidylinositol-anchor biosynthesis.</text>
</comment>
<comment type="pathway">
    <text evidence="2">Glycolipid biosynthesis; glycosylphosphatidylinositol-anchor biosynthesis.</text>
</comment>
<comment type="subunit">
    <text evidence="1">Part of the glycosylphosphatidylinositol-mannosyltransferase I complex that is composed of PIGM and PIGX.</text>
</comment>
<comment type="subcellular location">
    <subcellularLocation>
        <location evidence="2">Endoplasmic reticulum membrane</location>
        <topology evidence="2">Multi-pass membrane protein</topology>
    </subcellularLocation>
</comment>
<comment type="similarity">
    <text evidence="4">Belongs to the PIGM family.</text>
</comment>
<proteinExistence type="evidence at transcript level"/>
<name>PIGM_XENTR</name>
<evidence type="ECO:0000250" key="1">
    <source>
        <dbReference type="UniProtKB" id="Q9EQY6"/>
    </source>
</evidence>
<evidence type="ECO:0000250" key="2">
    <source>
        <dbReference type="UniProtKB" id="Q9H3S5"/>
    </source>
</evidence>
<evidence type="ECO:0000255" key="3"/>
<evidence type="ECO:0000305" key="4"/>
<sequence length="419" mass="49036">MMKQAGILKIFLQHQFMFPTAFFLRSALVLFGVYQDQTMLVKYTDVDYHVFTDAAEYLTQGVSPYKRATYRYTPLLAWILTPNIYVTELYGKMLFVCCDLLAAYLIHRILVDRGIKDSASLYCAIWLFNPLPMVVSSRGNAESVLAVLVLSVLYYVQKRRLIKGALIYGLSVHMKIYPITYILPIALFFQKEDFYGSQEGKRVVSNLKYIRIFRNLLQRLLSRDILLFVTVSGVTFALLTLFFYYRYGWEFLENTYLYHLTRRDIRHNFSPYFYMLYLTAENNNSFILGLAAFFPQLVLLFVVSLAYFKDLPFCCFLHTAIFVSFNKVCTSQYFLWYLCLLPLVMPGLKMSMTNGICLIILWFFSQAIWLVPAYFLEFEGQNTFLYIWCAGLLFLLINTVIIVQIISNYQLQSKKTKKT</sequence>
<reference key="1">
    <citation type="submission" date="2006-03" db="EMBL/GenBank/DDBJ databases">
        <authorList>
            <consortium name="Sanger Xenopus tropicalis EST/cDNA project"/>
        </authorList>
    </citation>
    <scope>NUCLEOTIDE SEQUENCE [LARGE SCALE MRNA]</scope>
    <source>
        <tissue>Gastrula</tissue>
    </source>
</reference>
<reference key="2">
    <citation type="submission" date="2004-08" db="EMBL/GenBank/DDBJ databases">
        <authorList>
            <consortium name="NIH - Xenopus Gene Collection (XGC) project"/>
        </authorList>
    </citation>
    <scope>NUCLEOTIDE SEQUENCE [LARGE SCALE MRNA]</scope>
    <source>
        <tissue>Embryo</tissue>
    </source>
</reference>
<protein>
    <recommendedName>
        <fullName evidence="2">GPI alpha-1,4-mannosyltransferase I, catalytic subunit</fullName>
        <ecNumber evidence="2">2.4.1.-</ecNumber>
    </recommendedName>
    <alternativeName>
        <fullName>GPI mannosyltransferase I</fullName>
        <shortName>GPI-MT-I</shortName>
    </alternativeName>
    <alternativeName>
        <fullName>Phosphatidylinositol-glycan biosynthesis class M protein</fullName>
        <shortName>PIG-M</shortName>
    </alternativeName>
</protein>
<dbReference type="EC" id="2.4.1.-" evidence="2"/>
<dbReference type="EMBL" id="CR760728">
    <property type="protein sequence ID" value="CAJ83771.1"/>
    <property type="molecule type" value="mRNA"/>
</dbReference>
<dbReference type="EMBL" id="BC081324">
    <property type="protein sequence ID" value="AAH81324.1"/>
    <property type="molecule type" value="mRNA"/>
</dbReference>
<dbReference type="RefSeq" id="NP_001008120.1">
    <property type="nucleotide sequence ID" value="NM_001008119.1"/>
</dbReference>
<dbReference type="RefSeq" id="XP_031759185.1">
    <property type="nucleotide sequence ID" value="XM_031903325.1"/>
</dbReference>
<dbReference type="SMR" id="Q66IJ4"/>
<dbReference type="FunCoup" id="Q66IJ4">
    <property type="interactions" value="1343"/>
</dbReference>
<dbReference type="STRING" id="8364.ENSXETP00000036225"/>
<dbReference type="CAZy" id="GT50">
    <property type="family name" value="Glycosyltransferase Family 50"/>
</dbReference>
<dbReference type="PaxDb" id="8364-ENSXETP00000013605"/>
<dbReference type="DNASU" id="493482"/>
<dbReference type="GeneID" id="493482"/>
<dbReference type="KEGG" id="xtr:493482"/>
<dbReference type="AGR" id="Xenbase:XB-GENE-5730241"/>
<dbReference type="CTD" id="93183"/>
<dbReference type="Xenbase" id="XB-GENE-5730241">
    <property type="gene designation" value="pigm"/>
</dbReference>
<dbReference type="eggNOG" id="KOG3893">
    <property type="taxonomic scope" value="Eukaryota"/>
</dbReference>
<dbReference type="HOGENOM" id="CLU_024220_3_1_1"/>
<dbReference type="InParanoid" id="Q66IJ4"/>
<dbReference type="OMA" id="MLWFIGQ"/>
<dbReference type="OrthoDB" id="1741594at2759"/>
<dbReference type="PhylomeDB" id="Q66IJ4"/>
<dbReference type="TreeFam" id="TF314752"/>
<dbReference type="Reactome" id="R-XTR-162710">
    <property type="pathway name" value="Synthesis of glycosylphosphatidylinositol (GPI)"/>
</dbReference>
<dbReference type="UniPathway" id="UPA00196"/>
<dbReference type="Proteomes" id="UP000008143">
    <property type="component" value="Chromosome 6"/>
</dbReference>
<dbReference type="Bgee" id="ENSXETG00000006188">
    <property type="expression patterns" value="Expressed in testis and 17 other cell types or tissues"/>
</dbReference>
<dbReference type="GO" id="GO:0005789">
    <property type="term" value="C:endoplasmic reticulum membrane"/>
    <property type="evidence" value="ECO:0000250"/>
    <property type="project" value="UniProtKB"/>
</dbReference>
<dbReference type="GO" id="GO:1990529">
    <property type="term" value="C:glycosylphosphatidylinositol-mannosyltransferase I complex"/>
    <property type="evidence" value="ECO:0000250"/>
    <property type="project" value="UniProtKB"/>
</dbReference>
<dbReference type="GO" id="GO:0180041">
    <property type="term" value="F:glycolipid 1,4-alpha-mannosyltransferase activity"/>
    <property type="evidence" value="ECO:0000250"/>
    <property type="project" value="UniProtKB"/>
</dbReference>
<dbReference type="GO" id="GO:0006506">
    <property type="term" value="P:GPI anchor biosynthetic process"/>
    <property type="evidence" value="ECO:0000250"/>
    <property type="project" value="UniProtKB"/>
</dbReference>
<dbReference type="InterPro" id="IPR007704">
    <property type="entry name" value="PIG-M"/>
</dbReference>
<dbReference type="PANTHER" id="PTHR12886:SF0">
    <property type="entry name" value="GPI MANNOSYLTRANSFERASE 1"/>
    <property type="match status" value="1"/>
</dbReference>
<dbReference type="PANTHER" id="PTHR12886">
    <property type="entry name" value="PIG-M MANNOSYLTRANSFERASE"/>
    <property type="match status" value="1"/>
</dbReference>
<dbReference type="Pfam" id="PF05007">
    <property type="entry name" value="Mannosyl_trans"/>
    <property type="match status" value="1"/>
</dbReference>